<sequence>TDRNFLRL</sequence>
<keyword id="KW-0027">Amidation</keyword>
<keyword id="KW-0903">Direct protein sequencing</keyword>
<keyword id="KW-0527">Neuropeptide</keyword>
<keyword id="KW-0964">Secreted</keyword>
<dbReference type="GO" id="GO:0005576">
    <property type="term" value="C:extracellular region"/>
    <property type="evidence" value="ECO:0007669"/>
    <property type="project" value="UniProtKB-SubCell"/>
</dbReference>
<dbReference type="GO" id="GO:0007218">
    <property type="term" value="P:neuropeptide signaling pathway"/>
    <property type="evidence" value="ECO:0007669"/>
    <property type="project" value="UniProtKB-KW"/>
</dbReference>
<organism>
    <name type="scientific">Praedatophasma maraisi</name>
    <name type="common">Gladiator</name>
    <name type="synonym">Heel-walker</name>
    <dbReference type="NCBI Taxonomy" id="409170"/>
    <lineage>
        <taxon>Eukaryota</taxon>
        <taxon>Metazoa</taxon>
        <taxon>Ecdysozoa</taxon>
        <taxon>Arthropoda</taxon>
        <taxon>Hexapoda</taxon>
        <taxon>Insecta</taxon>
        <taxon>Pterygota</taxon>
        <taxon>Neoptera</taxon>
        <taxon>Polyneoptera</taxon>
        <taxon>Mantophasmatodea</taxon>
        <taxon>Mantophasmatidae</taxon>
        <taxon>Praedatophasma</taxon>
    </lineage>
</organism>
<accession>B3A0G2</accession>
<name>FAR5_PRAMA</name>
<protein>
    <recommendedName>
        <fullName evidence="4">Extended FMRFamide-5</fullName>
        <shortName evidence="4">FMRFa-5</shortName>
    </recommendedName>
</protein>
<evidence type="ECO:0000250" key="1">
    <source>
        <dbReference type="UniProtKB" id="P34405"/>
    </source>
</evidence>
<evidence type="ECO:0000255" key="2"/>
<evidence type="ECO:0000269" key="3">
    <source>
    </source>
</evidence>
<evidence type="ECO:0000303" key="4">
    <source>
    </source>
</evidence>
<evidence type="ECO:0000305" key="5"/>
<evidence type="ECO:0000305" key="6">
    <source>
    </source>
</evidence>
<feature type="peptide" id="PRO_0000421518" description="Extended FMRFamide-5" evidence="3">
    <location>
        <begin position="1"/>
        <end position="8"/>
    </location>
</feature>
<feature type="modified residue" description="Leucine amide" evidence="3">
    <location>
        <position position="8"/>
    </location>
</feature>
<feature type="unsure residue" description="L or I" evidence="3">
    <location>
        <position position="6"/>
    </location>
</feature>
<feature type="unsure residue" description="L or I" evidence="3">
    <location>
        <position position="8"/>
    </location>
</feature>
<proteinExistence type="evidence at protein level"/>
<comment type="function">
    <text evidence="1">FMRFamides and FMRFamide-like peptides are neuropeptides.</text>
</comment>
<comment type="subcellular location">
    <subcellularLocation>
        <location evidence="6">Secreted</location>
    </subcellularLocation>
</comment>
<comment type="similarity">
    <text evidence="2">Belongs to the FARP (FMRF amide related peptide) family.</text>
</comment>
<reference evidence="5" key="1">
    <citation type="journal article" date="2012" name="Syst. Biol.">
        <title>Peptidomics-based phylogeny and biogeography of Mantophasmatodea (Hexapoda).</title>
        <authorList>
            <person name="Predel R."/>
            <person name="Neupert S."/>
            <person name="Huetteroth W."/>
            <person name="Kahnt J."/>
            <person name="Waidelich D."/>
            <person name="Roth S."/>
        </authorList>
    </citation>
    <scope>PROTEIN SEQUENCE</scope>
    <scope>AMIDATION AT LEU-8</scope>
    <source>
        <tissue evidence="3">Thoracic perisympathetic organs</tissue>
    </source>
</reference>